<accession>O30127</accession>
<dbReference type="EC" id="3.1.26.5" evidence="1"/>
<dbReference type="EMBL" id="AE000782">
    <property type="protein sequence ID" value="AAB91122.1"/>
    <property type="molecule type" value="Genomic_DNA"/>
</dbReference>
<dbReference type="PIR" id="E69263">
    <property type="entry name" value="E69263"/>
</dbReference>
<dbReference type="RefSeq" id="WP_010877623.1">
    <property type="nucleotide sequence ID" value="NC_000917.1"/>
</dbReference>
<dbReference type="SMR" id="O30127"/>
<dbReference type="STRING" id="224325.AF_0109"/>
<dbReference type="PaxDb" id="224325-AF_0109"/>
<dbReference type="DNASU" id="1483321"/>
<dbReference type="EnsemblBacteria" id="AAB91122">
    <property type="protein sequence ID" value="AAB91122"/>
    <property type="gene ID" value="AF_0109"/>
</dbReference>
<dbReference type="KEGG" id="afu:AF_0109"/>
<dbReference type="eggNOG" id="arCOG04345">
    <property type="taxonomic scope" value="Archaea"/>
</dbReference>
<dbReference type="HOGENOM" id="CLU_079140_3_1_2"/>
<dbReference type="OrthoDB" id="10058at2157"/>
<dbReference type="PhylomeDB" id="O30127"/>
<dbReference type="Proteomes" id="UP000002199">
    <property type="component" value="Chromosome"/>
</dbReference>
<dbReference type="GO" id="GO:0005737">
    <property type="term" value="C:cytoplasm"/>
    <property type="evidence" value="ECO:0007669"/>
    <property type="project" value="UniProtKB-SubCell"/>
</dbReference>
<dbReference type="GO" id="GO:0030677">
    <property type="term" value="C:ribonuclease P complex"/>
    <property type="evidence" value="ECO:0007669"/>
    <property type="project" value="UniProtKB-UniRule"/>
</dbReference>
<dbReference type="GO" id="GO:0004526">
    <property type="term" value="F:ribonuclease P activity"/>
    <property type="evidence" value="ECO:0007669"/>
    <property type="project" value="UniProtKB-UniRule"/>
</dbReference>
<dbReference type="GO" id="GO:0008270">
    <property type="term" value="F:zinc ion binding"/>
    <property type="evidence" value="ECO:0007669"/>
    <property type="project" value="UniProtKB-UniRule"/>
</dbReference>
<dbReference type="GO" id="GO:0001682">
    <property type="term" value="P:tRNA 5'-leader removal"/>
    <property type="evidence" value="ECO:0007669"/>
    <property type="project" value="UniProtKB-UniRule"/>
</dbReference>
<dbReference type="Gene3D" id="6.20.50.20">
    <property type="match status" value="1"/>
</dbReference>
<dbReference type="Gene3D" id="1.20.5.420">
    <property type="entry name" value="Immunoglobulin FC, subunit C"/>
    <property type="match status" value="1"/>
</dbReference>
<dbReference type="HAMAP" id="MF_00757">
    <property type="entry name" value="RNase_P_4"/>
    <property type="match status" value="1"/>
</dbReference>
<dbReference type="InterPro" id="IPR016432">
    <property type="entry name" value="RNP4"/>
</dbReference>
<dbReference type="InterPro" id="IPR007175">
    <property type="entry name" value="Rpr2/Snm1/Rpp21"/>
</dbReference>
<dbReference type="PANTHER" id="PTHR14742:SF0">
    <property type="entry name" value="RIBONUCLEASE P PROTEIN SUBUNIT P21"/>
    <property type="match status" value="1"/>
</dbReference>
<dbReference type="PANTHER" id="PTHR14742">
    <property type="entry name" value="RIBONUCLEASE P SUBUNIT P21"/>
    <property type="match status" value="1"/>
</dbReference>
<dbReference type="Pfam" id="PF04032">
    <property type="entry name" value="Rpr2"/>
    <property type="match status" value="1"/>
</dbReference>
<dbReference type="PIRSF" id="PIRSF004878">
    <property type="entry name" value="RNase_P_4"/>
    <property type="match status" value="1"/>
</dbReference>
<comment type="function">
    <text evidence="1">Part of ribonuclease P, a protein complex that generates mature tRNA molecules by cleaving their 5'-ends.</text>
</comment>
<comment type="catalytic activity">
    <reaction evidence="1">
        <text>Endonucleolytic cleavage of RNA, removing 5'-extranucleotides from tRNA precursor.</text>
        <dbReference type="EC" id="3.1.26.5"/>
    </reaction>
</comment>
<comment type="cofactor">
    <cofactor evidence="1">
        <name>Zn(2+)</name>
        <dbReference type="ChEBI" id="CHEBI:29105"/>
    </cofactor>
    <text evidence="1">Binds 1 zinc ion per subunit.</text>
</comment>
<comment type="subunit">
    <text evidence="1">Consists of a catalytic RNA component and at least 4-5 protein subunits.</text>
</comment>
<comment type="subcellular location">
    <subcellularLocation>
        <location evidence="1">Cytoplasm</location>
    </subcellularLocation>
</comment>
<comment type="similarity">
    <text evidence="1">Belongs to the eukaryotic/archaeal RNase P protein component 4 family.</text>
</comment>
<reference key="1">
    <citation type="journal article" date="1997" name="Nature">
        <title>The complete genome sequence of the hyperthermophilic, sulphate-reducing archaeon Archaeoglobus fulgidus.</title>
        <authorList>
            <person name="Klenk H.-P."/>
            <person name="Clayton R.A."/>
            <person name="Tomb J.-F."/>
            <person name="White O."/>
            <person name="Nelson K.E."/>
            <person name="Ketchum K.A."/>
            <person name="Dodson R.J."/>
            <person name="Gwinn M.L."/>
            <person name="Hickey E.K."/>
            <person name="Peterson J.D."/>
            <person name="Richardson D.L."/>
            <person name="Kerlavage A.R."/>
            <person name="Graham D.E."/>
            <person name="Kyrpides N.C."/>
            <person name="Fleischmann R.D."/>
            <person name="Quackenbush J."/>
            <person name="Lee N.H."/>
            <person name="Sutton G.G."/>
            <person name="Gill S.R."/>
            <person name="Kirkness E.F."/>
            <person name="Dougherty B.A."/>
            <person name="McKenney K."/>
            <person name="Adams M.D."/>
            <person name="Loftus B.J."/>
            <person name="Peterson S.N."/>
            <person name="Reich C.I."/>
            <person name="McNeil L.K."/>
            <person name="Badger J.H."/>
            <person name="Glodek A."/>
            <person name="Zhou L."/>
            <person name="Overbeek R."/>
            <person name="Gocayne J.D."/>
            <person name="Weidman J.F."/>
            <person name="McDonald L.A."/>
            <person name="Utterback T.R."/>
            <person name="Cotton M.D."/>
            <person name="Spriggs T."/>
            <person name="Artiach P."/>
            <person name="Kaine B.P."/>
            <person name="Sykes S.M."/>
            <person name="Sadow P.W."/>
            <person name="D'Andrea K.P."/>
            <person name="Bowman C."/>
            <person name="Fujii C."/>
            <person name="Garland S.A."/>
            <person name="Mason T.M."/>
            <person name="Olsen G.J."/>
            <person name="Fraser C.M."/>
            <person name="Smith H.O."/>
            <person name="Woese C.R."/>
            <person name="Venter J.C."/>
        </authorList>
    </citation>
    <scope>NUCLEOTIDE SEQUENCE [LARGE SCALE GENOMIC DNA]</scope>
    <source>
        <strain>ATCC 49558 / DSM 4304 / JCM 9628 / NBRC 100126 / VC-16</strain>
    </source>
</reference>
<keyword id="KW-0963">Cytoplasm</keyword>
<keyword id="KW-0255">Endonuclease</keyword>
<keyword id="KW-0378">Hydrolase</keyword>
<keyword id="KW-0479">Metal-binding</keyword>
<keyword id="KW-0540">Nuclease</keyword>
<keyword id="KW-1185">Reference proteome</keyword>
<keyword id="KW-0819">tRNA processing</keyword>
<keyword id="KW-0862">Zinc</keyword>
<name>RNP4_ARCFU</name>
<sequence length="107" mass="13307">MLRRDKKRESRIARERVFYLIKRAEEWKNIDYELARRYVELARKIAMRYRVRIPRELKATYCKKCLYPYKAGKFRVRVRKSRVIITCLNCGFERRIPIRPKRVNRKV</sequence>
<protein>
    <recommendedName>
        <fullName evidence="1">Ribonuclease P protein component 4</fullName>
        <shortName evidence="1">RNase P component 4</shortName>
        <ecNumber evidence="1">3.1.26.5</ecNumber>
    </recommendedName>
    <alternativeName>
        <fullName evidence="1">Rpp21</fullName>
    </alternativeName>
</protein>
<organism>
    <name type="scientific">Archaeoglobus fulgidus (strain ATCC 49558 / DSM 4304 / JCM 9628 / NBRC 100126 / VC-16)</name>
    <dbReference type="NCBI Taxonomy" id="224325"/>
    <lineage>
        <taxon>Archaea</taxon>
        <taxon>Methanobacteriati</taxon>
        <taxon>Methanobacteriota</taxon>
        <taxon>Archaeoglobi</taxon>
        <taxon>Archaeoglobales</taxon>
        <taxon>Archaeoglobaceae</taxon>
        <taxon>Archaeoglobus</taxon>
    </lineage>
</organism>
<feature type="chain" id="PRO_0000153849" description="Ribonuclease P protein component 4">
    <location>
        <begin position="1"/>
        <end position="107"/>
    </location>
</feature>
<feature type="binding site" evidence="1">
    <location>
        <position position="62"/>
    </location>
    <ligand>
        <name>Zn(2+)</name>
        <dbReference type="ChEBI" id="CHEBI:29105"/>
    </ligand>
</feature>
<feature type="binding site" evidence="1">
    <location>
        <position position="65"/>
    </location>
    <ligand>
        <name>Zn(2+)</name>
        <dbReference type="ChEBI" id="CHEBI:29105"/>
    </ligand>
</feature>
<feature type="binding site" evidence="1">
    <location>
        <position position="87"/>
    </location>
    <ligand>
        <name>Zn(2+)</name>
        <dbReference type="ChEBI" id="CHEBI:29105"/>
    </ligand>
</feature>
<feature type="binding site" evidence="1">
    <location>
        <position position="90"/>
    </location>
    <ligand>
        <name>Zn(2+)</name>
        <dbReference type="ChEBI" id="CHEBI:29105"/>
    </ligand>
</feature>
<evidence type="ECO:0000255" key="1">
    <source>
        <dbReference type="HAMAP-Rule" id="MF_00757"/>
    </source>
</evidence>
<gene>
    <name evidence="1" type="primary">rnp4</name>
    <name type="ordered locus">AF_0109</name>
</gene>
<proteinExistence type="inferred from homology"/>